<name>ALG11_XENLA</name>
<feature type="chain" id="PRO_0000295620" description="GDP-Man:Man(3)GlcNAc(2)-PP-Dol alpha-1,2-mannosyltransferase">
    <location>
        <begin position="1"/>
        <end position="486"/>
    </location>
</feature>
<feature type="topological domain" description="Lumenal" evidence="1">
    <location>
        <begin position="1"/>
        <end position="16"/>
    </location>
</feature>
<feature type="transmembrane region" description="Helical" evidence="3">
    <location>
        <begin position="17"/>
        <end position="37"/>
    </location>
</feature>
<feature type="topological domain" description="Cytoplasmic" evidence="1">
    <location>
        <begin position="38"/>
        <end position="229"/>
    </location>
</feature>
<feature type="intramembrane region" description="Helical" evidence="3">
    <location>
        <begin position="230"/>
        <end position="250"/>
    </location>
</feature>
<feature type="topological domain" description="Cytoplasmic" evidence="1">
    <location>
        <begin position="251"/>
        <end position="393"/>
    </location>
</feature>
<feature type="intramembrane region" description="Helical" evidence="3">
    <location>
        <begin position="394"/>
        <end position="414"/>
    </location>
</feature>
<feature type="topological domain" description="Cytoplasmic" evidence="1">
    <location>
        <begin position="415"/>
        <end position="486"/>
    </location>
</feature>
<feature type="splice variant" id="VSP_026942" description="In isoform 2." evidence="4">
    <original>IVECMAAGTIILAHNSGGPKLDIVVPHEEQQTGFLADSVDSYAAAMDHILSLTPEQRLSIRQNARLSVGRFSDQEFEANFLASSEPLFK</original>
    <variation>ESLAILFCKHIIASINILLMDA</variation>
    <location>
        <begin position="398"/>
        <end position="486"/>
    </location>
</feature>
<feature type="sequence conflict" description="In Ref. 1; AAH97779." evidence="5" ref="1">
    <original>T</original>
    <variation>A</variation>
    <location>
        <position position="24"/>
    </location>
</feature>
<feature type="sequence conflict" description="In Ref. 1; AAI06204." evidence="5" ref="1">
    <original>V</original>
    <variation>I</variation>
    <location>
        <position position="95"/>
    </location>
</feature>
<feature type="sequence conflict" description="In Ref. 1; AAI06204." evidence="5" ref="1">
    <original>A</original>
    <variation>T</variation>
    <location>
        <position position="327"/>
    </location>
</feature>
<feature type="sequence conflict" description="In Ref. 1; AAI06204." evidence="5" ref="1">
    <original>H</original>
    <variation>R</variation>
    <location>
        <position position="445"/>
    </location>
</feature>
<sequence length="486" mass="54709">MAGPMCLCGMMRLLTALFIPVLITSVGLCLIFVLLFICTRLWVQRKKKVEIGKDGKKKKVVAFFHPYCNAGGGGERVLWCALRSLQKRYKDAIYVIYTGDKDASEEQILNGAAARFNIKLSHPVRFIFLEKRGLVEASCYPRFTLLGQSLGSVVLGWEALTKCVPDIYIDSMGYAFTLPLFKYLGGCHVGCYVHYPTISMDMLSVVRSQHARFNNAAFISNNPVLSRLKLIYYYLFALFYGWVGSCSDVIMVNSTWTFSHILDLWKCSDRTSIVYPPCDVQTFLEIDINQHKENEEHSVVSIGQFRPEKDHPLQIRAFAALLEKKTAEQRAKLKLILIGGCRNDEDELRVSELKKLSSELGIPVEFKVNVPFEELKKHLSEATIGLHTMWNEHFGIGIVECMAAGTIILAHNSGGPKLDIVVPHEEQQTGFLADSVDSYAAAMDHILSLTPEQRLSIRQNARLSVGRFSDQEFEANFLASSEPLFK</sequence>
<evidence type="ECO:0000250" key="1">
    <source>
        <dbReference type="UniProtKB" id="P53954"/>
    </source>
</evidence>
<evidence type="ECO:0000250" key="2">
    <source>
        <dbReference type="UniProtKB" id="Q2TAA5"/>
    </source>
</evidence>
<evidence type="ECO:0000255" key="3"/>
<evidence type="ECO:0000303" key="4">
    <source ref="1"/>
</evidence>
<evidence type="ECO:0000305" key="5"/>
<comment type="function">
    <text evidence="2">GDP-Man:Man(3)GlcNAc(2)-PP-Dol alpha-1,2-mannosyltransferase that operates in the biosynthetic pathway of dolichol-linked oligosaccharides, the glycan precursors employed in protein asparagine (N)-glycosylation. The assembly of dolichol-linked oligosaccharides begins on the cytosolic side of the endoplasmic reticulum membrane and finishes in its lumen. The sequential addition of sugars to dolichol pyrophosphate produces dolichol-linked oligosaccharides containing fourteen sugars, including two GlcNAcs, nine mannoses and three glucoses. Once assembled, the oligosaccharide is transferred from the lipid to nascent proteins by oligosaccharyltransferases. Catalyzes, on the cytoplasmic face of the endoplasmic reticulum, the addition of the fourth and fifth mannose residues to the dolichol-linked oligosaccharide chain, to produce Man(5)GlcNAc(2)-PP-dolichol core oligosaccharide. Man(5)GlcNAc(2)-PP-dolichol is a substrate for ALG3, the following enzyme in the biosynthetic pathway.</text>
</comment>
<comment type="catalytic activity">
    <reaction evidence="2">
        <text>an alpha-D-Man-(1-&gt;3)-[alpha-D-Man-(1-&gt;6)]-beta-D-Man-(1-&gt;4)-beta-D-GlcNAc-(1-&gt;4)-alpha-D-GlcNAc-diphospho-di-trans,poly-cis-dolichol + 2 GDP-alpha-D-mannose = an alpha-D-Man-(1-&gt;2)-alpha-D-Man-(1-&gt;2)-alpha-D-Man-(1-&gt;3)-[alpha-D-Man-(1-&gt;6)]-beta-D-Man-(1-&gt;4)-beta-D-GlcNAc-(1-&gt;4)-alpha-D-GlcNAc-diphospho-di-trans,poly-cis-dolichol + 2 GDP + 2 H(+)</text>
        <dbReference type="Rhea" id="RHEA:29523"/>
        <dbReference type="Rhea" id="RHEA-COMP:19515"/>
        <dbReference type="Rhea" id="RHEA-COMP:19516"/>
        <dbReference type="ChEBI" id="CHEBI:15378"/>
        <dbReference type="ChEBI" id="CHEBI:57527"/>
        <dbReference type="ChEBI" id="CHEBI:58189"/>
        <dbReference type="ChEBI" id="CHEBI:132511"/>
        <dbReference type="ChEBI" id="CHEBI:132515"/>
        <dbReference type="EC" id="2.4.1.131"/>
    </reaction>
    <physiologicalReaction direction="left-to-right" evidence="2">
        <dbReference type="Rhea" id="RHEA:29524"/>
    </physiologicalReaction>
</comment>
<comment type="pathway">
    <text evidence="2">Protein modification; protein glycosylation.</text>
</comment>
<comment type="subcellular location">
    <subcellularLocation>
        <location evidence="2">Endoplasmic reticulum membrane</location>
        <topology evidence="1">Single-pass membrane protein</topology>
    </subcellularLocation>
</comment>
<comment type="alternative products">
    <event type="alternative splicing"/>
    <isoform>
        <id>Q08B22-1</id>
        <name>1</name>
        <sequence type="displayed"/>
    </isoform>
    <isoform>
        <id>Q08B22-2</id>
        <name>2</name>
        <sequence type="described" ref="VSP_026942"/>
    </isoform>
</comment>
<comment type="similarity">
    <text evidence="5">Belongs to the glycosyltransferase group 1 family. Glycosyltransferase 4 subfamily.</text>
</comment>
<organism>
    <name type="scientific">Xenopus laevis</name>
    <name type="common">African clawed frog</name>
    <dbReference type="NCBI Taxonomy" id="8355"/>
    <lineage>
        <taxon>Eukaryota</taxon>
        <taxon>Metazoa</taxon>
        <taxon>Chordata</taxon>
        <taxon>Craniata</taxon>
        <taxon>Vertebrata</taxon>
        <taxon>Euteleostomi</taxon>
        <taxon>Amphibia</taxon>
        <taxon>Batrachia</taxon>
        <taxon>Anura</taxon>
        <taxon>Pipoidea</taxon>
        <taxon>Pipidae</taxon>
        <taxon>Xenopodinae</taxon>
        <taxon>Xenopus</taxon>
        <taxon>Xenopus</taxon>
    </lineage>
</organism>
<keyword id="KW-0025">Alternative splicing</keyword>
<keyword id="KW-0256">Endoplasmic reticulum</keyword>
<keyword id="KW-0328">Glycosyltransferase</keyword>
<keyword id="KW-0472">Membrane</keyword>
<keyword id="KW-1185">Reference proteome</keyword>
<keyword id="KW-0808">Transferase</keyword>
<keyword id="KW-0812">Transmembrane</keyword>
<keyword id="KW-1133">Transmembrane helix</keyword>
<proteinExistence type="evidence at transcript level"/>
<dbReference type="EC" id="2.4.1.131" evidence="2"/>
<dbReference type="EMBL" id="BC097779">
    <property type="protein sequence ID" value="AAH97779.1"/>
    <property type="molecule type" value="mRNA"/>
</dbReference>
<dbReference type="EMBL" id="BC106203">
    <property type="protein sequence ID" value="AAI06204.1"/>
    <property type="molecule type" value="mRNA"/>
</dbReference>
<dbReference type="EMBL" id="BC124907">
    <property type="protein sequence ID" value="AAI24908.1"/>
    <property type="molecule type" value="mRNA"/>
</dbReference>
<dbReference type="RefSeq" id="NP_001116360.1">
    <molecule id="Q08B22-2"/>
    <property type="nucleotide sequence ID" value="NM_001122888.1"/>
</dbReference>
<dbReference type="SMR" id="Q08B22"/>
<dbReference type="CAZy" id="GT4">
    <property type="family name" value="Glycosyltransferase Family 4"/>
</dbReference>
<dbReference type="DNASU" id="733388"/>
<dbReference type="GeneID" id="733388"/>
<dbReference type="KEGG" id="xla:733388"/>
<dbReference type="AGR" id="Xenbase:XB-GENE-5934162"/>
<dbReference type="CTD" id="733388"/>
<dbReference type="Xenbase" id="XB-GENE-5934162">
    <property type="gene designation" value="alg11.L"/>
</dbReference>
<dbReference type="OrthoDB" id="2276068at2759"/>
<dbReference type="UniPathway" id="UPA00378"/>
<dbReference type="Proteomes" id="UP000186698">
    <property type="component" value="Chromosome 2L"/>
</dbReference>
<dbReference type="Bgee" id="733388">
    <property type="expression patterns" value="Expressed in egg cell and 19 other cell types or tissues"/>
</dbReference>
<dbReference type="GO" id="GO:0005789">
    <property type="term" value="C:endoplasmic reticulum membrane"/>
    <property type="evidence" value="ECO:0000250"/>
    <property type="project" value="UniProtKB"/>
</dbReference>
<dbReference type="GO" id="GO:0004377">
    <property type="term" value="F:GDP-Man:Man3GlcNAc2-PP-Dol alpha-1,2-mannosyltransferase activity"/>
    <property type="evidence" value="ECO:0000250"/>
    <property type="project" value="UniProtKB"/>
</dbReference>
<dbReference type="GO" id="GO:0006488">
    <property type="term" value="P:dolichol-linked oligosaccharide biosynthetic process"/>
    <property type="evidence" value="ECO:0000250"/>
    <property type="project" value="UniProtKB"/>
</dbReference>
<dbReference type="GO" id="GO:0006487">
    <property type="term" value="P:protein N-linked glycosylation"/>
    <property type="evidence" value="ECO:0000250"/>
    <property type="project" value="UniProtKB"/>
</dbReference>
<dbReference type="CDD" id="cd03806">
    <property type="entry name" value="GT4_ALG11-like"/>
    <property type="match status" value="1"/>
</dbReference>
<dbReference type="FunFam" id="3.40.50.2000:FF:000076">
    <property type="entry name" value="GDP-Man:Man(3)GlcNAc(2)-PP-Dol alpha-1,2-mannosyltransferase"/>
    <property type="match status" value="1"/>
</dbReference>
<dbReference type="Gene3D" id="3.40.50.2000">
    <property type="entry name" value="Glycogen Phosphorylase B"/>
    <property type="match status" value="1"/>
</dbReference>
<dbReference type="InterPro" id="IPR038013">
    <property type="entry name" value="ALG11"/>
</dbReference>
<dbReference type="InterPro" id="IPR031814">
    <property type="entry name" value="ALG11_N"/>
</dbReference>
<dbReference type="InterPro" id="IPR001296">
    <property type="entry name" value="Glyco_trans_1"/>
</dbReference>
<dbReference type="PANTHER" id="PTHR45919">
    <property type="entry name" value="GDP-MAN:MAN(3)GLCNAC(2)-PP-DOL ALPHA-1,2-MANNOSYLTRANSFERASE"/>
    <property type="match status" value="1"/>
</dbReference>
<dbReference type="PANTHER" id="PTHR45919:SF1">
    <property type="entry name" value="GDP-MAN:MAN(3)GLCNAC(2)-PP-DOL ALPHA-1,2-MANNOSYLTRANSFERASE"/>
    <property type="match status" value="1"/>
</dbReference>
<dbReference type="Pfam" id="PF15924">
    <property type="entry name" value="ALG11_N"/>
    <property type="match status" value="1"/>
</dbReference>
<dbReference type="Pfam" id="PF00534">
    <property type="entry name" value="Glycos_transf_1"/>
    <property type="match status" value="1"/>
</dbReference>
<dbReference type="SUPFAM" id="SSF53756">
    <property type="entry name" value="UDP-Glycosyltransferase/glycogen phosphorylase"/>
    <property type="match status" value="1"/>
</dbReference>
<reference key="1">
    <citation type="submission" date="2006-10" db="EMBL/GenBank/DDBJ databases">
        <authorList>
            <consortium name="NIH - Xenopus Gene Collection (XGC) project"/>
        </authorList>
    </citation>
    <scope>NUCLEOTIDE SEQUENCE [LARGE SCALE MRNA] (ISOFORMS 1 AND 2)</scope>
    <source>
        <tissue>Egg</tissue>
        <tissue>Embryo</tissue>
        <tissue>Ovary</tissue>
    </source>
</reference>
<gene>
    <name type="primary">alg11</name>
</gene>
<protein>
    <recommendedName>
        <fullName evidence="2">GDP-Man:Man(3)GlcNAc(2)-PP-Dol alpha-1,2-mannosyltransferase</fullName>
        <ecNumber evidence="2">2.4.1.131</ecNumber>
    </recommendedName>
    <alternativeName>
        <fullName>Asparagine-linked glycosylation protein 11 homolog</fullName>
    </alternativeName>
    <alternativeName>
        <fullName>Glycolipid 2-alpha-mannosyltransferase</fullName>
    </alternativeName>
</protein>
<accession>Q08B22</accession>
<accession>Q3B8M7</accession>
<accession>Q4QQZ6</accession>